<comment type="function">
    <text evidence="1">Binds the lower part of the 30S subunit head. Binds mRNA in the 70S ribosome, positioning it for translation.</text>
</comment>
<comment type="subunit">
    <text evidence="1">Part of the 30S ribosomal subunit. Forms a tight complex with proteins S10 and S14.</text>
</comment>
<comment type="similarity">
    <text evidence="1">Belongs to the universal ribosomal protein uS3 family.</text>
</comment>
<evidence type="ECO:0000255" key="1">
    <source>
        <dbReference type="HAMAP-Rule" id="MF_01309"/>
    </source>
</evidence>
<evidence type="ECO:0000305" key="2"/>
<gene>
    <name evidence="1" type="primary">rpsC</name>
    <name type="ordered locus">APL_1766</name>
</gene>
<organism>
    <name type="scientific">Actinobacillus pleuropneumoniae serotype 5b (strain L20)</name>
    <dbReference type="NCBI Taxonomy" id="416269"/>
    <lineage>
        <taxon>Bacteria</taxon>
        <taxon>Pseudomonadati</taxon>
        <taxon>Pseudomonadota</taxon>
        <taxon>Gammaproteobacteria</taxon>
        <taxon>Pasteurellales</taxon>
        <taxon>Pasteurellaceae</taxon>
        <taxon>Actinobacillus</taxon>
    </lineage>
</organism>
<reference key="1">
    <citation type="journal article" date="2008" name="J. Bacteriol.">
        <title>The complete genome sequence of Actinobacillus pleuropneumoniae L20 (serotype 5b).</title>
        <authorList>
            <person name="Foote S.J."/>
            <person name="Bosse J.T."/>
            <person name="Bouevitch A.B."/>
            <person name="Langford P.R."/>
            <person name="Young N.M."/>
            <person name="Nash J.H.E."/>
        </authorList>
    </citation>
    <scope>NUCLEOTIDE SEQUENCE [LARGE SCALE GENOMIC DNA]</scope>
    <source>
        <strain>L20</strain>
    </source>
</reference>
<name>RS3_ACTP2</name>
<accession>A3N364</accession>
<dbReference type="EMBL" id="CP000569">
    <property type="protein sequence ID" value="ABN74850.1"/>
    <property type="molecule type" value="Genomic_DNA"/>
</dbReference>
<dbReference type="RefSeq" id="WP_005599293.1">
    <property type="nucleotide sequence ID" value="NC_009053.1"/>
</dbReference>
<dbReference type="SMR" id="A3N364"/>
<dbReference type="STRING" id="416269.APL_1766"/>
<dbReference type="EnsemblBacteria" id="ABN74850">
    <property type="protein sequence ID" value="ABN74850"/>
    <property type="gene ID" value="APL_1766"/>
</dbReference>
<dbReference type="GeneID" id="48600058"/>
<dbReference type="KEGG" id="apl:APL_1766"/>
<dbReference type="eggNOG" id="COG0092">
    <property type="taxonomic scope" value="Bacteria"/>
</dbReference>
<dbReference type="HOGENOM" id="CLU_058591_0_2_6"/>
<dbReference type="Proteomes" id="UP000001432">
    <property type="component" value="Chromosome"/>
</dbReference>
<dbReference type="GO" id="GO:0022627">
    <property type="term" value="C:cytosolic small ribosomal subunit"/>
    <property type="evidence" value="ECO:0007669"/>
    <property type="project" value="TreeGrafter"/>
</dbReference>
<dbReference type="GO" id="GO:0003729">
    <property type="term" value="F:mRNA binding"/>
    <property type="evidence" value="ECO:0007669"/>
    <property type="project" value="UniProtKB-UniRule"/>
</dbReference>
<dbReference type="GO" id="GO:0019843">
    <property type="term" value="F:rRNA binding"/>
    <property type="evidence" value="ECO:0007669"/>
    <property type="project" value="UniProtKB-UniRule"/>
</dbReference>
<dbReference type="GO" id="GO:0003735">
    <property type="term" value="F:structural constituent of ribosome"/>
    <property type="evidence" value="ECO:0007669"/>
    <property type="project" value="InterPro"/>
</dbReference>
<dbReference type="GO" id="GO:0006412">
    <property type="term" value="P:translation"/>
    <property type="evidence" value="ECO:0007669"/>
    <property type="project" value="UniProtKB-UniRule"/>
</dbReference>
<dbReference type="CDD" id="cd02412">
    <property type="entry name" value="KH-II_30S_S3"/>
    <property type="match status" value="1"/>
</dbReference>
<dbReference type="FunFam" id="3.30.1140.32:FF:000001">
    <property type="entry name" value="30S ribosomal protein S3"/>
    <property type="match status" value="1"/>
</dbReference>
<dbReference type="FunFam" id="3.30.300.20:FF:000001">
    <property type="entry name" value="30S ribosomal protein S3"/>
    <property type="match status" value="1"/>
</dbReference>
<dbReference type="Gene3D" id="3.30.300.20">
    <property type="match status" value="1"/>
</dbReference>
<dbReference type="Gene3D" id="3.30.1140.32">
    <property type="entry name" value="Ribosomal protein S3, C-terminal domain"/>
    <property type="match status" value="1"/>
</dbReference>
<dbReference type="HAMAP" id="MF_01309_B">
    <property type="entry name" value="Ribosomal_uS3_B"/>
    <property type="match status" value="1"/>
</dbReference>
<dbReference type="InterPro" id="IPR004087">
    <property type="entry name" value="KH_dom"/>
</dbReference>
<dbReference type="InterPro" id="IPR015946">
    <property type="entry name" value="KH_dom-like_a/b"/>
</dbReference>
<dbReference type="InterPro" id="IPR004044">
    <property type="entry name" value="KH_dom_type_2"/>
</dbReference>
<dbReference type="InterPro" id="IPR009019">
    <property type="entry name" value="KH_sf_prok-type"/>
</dbReference>
<dbReference type="InterPro" id="IPR036419">
    <property type="entry name" value="Ribosomal_S3_C_sf"/>
</dbReference>
<dbReference type="InterPro" id="IPR005704">
    <property type="entry name" value="Ribosomal_uS3_bac-typ"/>
</dbReference>
<dbReference type="InterPro" id="IPR001351">
    <property type="entry name" value="Ribosomal_uS3_C"/>
</dbReference>
<dbReference type="InterPro" id="IPR018280">
    <property type="entry name" value="Ribosomal_uS3_CS"/>
</dbReference>
<dbReference type="NCBIfam" id="TIGR01009">
    <property type="entry name" value="rpsC_bact"/>
    <property type="match status" value="1"/>
</dbReference>
<dbReference type="PANTHER" id="PTHR11760">
    <property type="entry name" value="30S/40S RIBOSOMAL PROTEIN S3"/>
    <property type="match status" value="1"/>
</dbReference>
<dbReference type="PANTHER" id="PTHR11760:SF19">
    <property type="entry name" value="SMALL RIBOSOMAL SUBUNIT PROTEIN US3C"/>
    <property type="match status" value="1"/>
</dbReference>
<dbReference type="Pfam" id="PF07650">
    <property type="entry name" value="KH_2"/>
    <property type="match status" value="1"/>
</dbReference>
<dbReference type="Pfam" id="PF00189">
    <property type="entry name" value="Ribosomal_S3_C"/>
    <property type="match status" value="1"/>
</dbReference>
<dbReference type="SMART" id="SM00322">
    <property type="entry name" value="KH"/>
    <property type="match status" value="1"/>
</dbReference>
<dbReference type="SUPFAM" id="SSF54814">
    <property type="entry name" value="Prokaryotic type KH domain (KH-domain type II)"/>
    <property type="match status" value="1"/>
</dbReference>
<dbReference type="SUPFAM" id="SSF54821">
    <property type="entry name" value="Ribosomal protein S3 C-terminal domain"/>
    <property type="match status" value="1"/>
</dbReference>
<dbReference type="PROSITE" id="PS50823">
    <property type="entry name" value="KH_TYPE_2"/>
    <property type="match status" value="1"/>
</dbReference>
<dbReference type="PROSITE" id="PS00548">
    <property type="entry name" value="RIBOSOMAL_S3"/>
    <property type="match status" value="1"/>
</dbReference>
<sequence length="235" mass="25896">MGQKVHPNGIRLGIVKPWNSTWFANTQDFADNLDGDFKVRKFLNKELANASVSRITIERPAKSIRVTIHTARPGIVIGKKGEDVEKLRNAVSQIAGVPAQINIAEVKKPELDAKLVADSIASQLERRVMFRRAMKRAVQNAMRLGAKGIKVEVSGRLGGAEIARSEWYREGRVPLHTLRADIDYNTAEAHTTYGVIGVKVWIFKGEILGGMAAVIESEKEPAAQPKKAPRGKGRK</sequence>
<proteinExistence type="inferred from homology"/>
<protein>
    <recommendedName>
        <fullName evidence="1">Small ribosomal subunit protein uS3</fullName>
    </recommendedName>
    <alternativeName>
        <fullName evidence="2">30S ribosomal protein S3</fullName>
    </alternativeName>
</protein>
<keyword id="KW-1185">Reference proteome</keyword>
<keyword id="KW-0687">Ribonucleoprotein</keyword>
<keyword id="KW-0689">Ribosomal protein</keyword>
<keyword id="KW-0694">RNA-binding</keyword>
<keyword id="KW-0699">rRNA-binding</keyword>
<feature type="chain" id="PRO_0000293743" description="Small ribosomal subunit protein uS3">
    <location>
        <begin position="1"/>
        <end position="235"/>
    </location>
</feature>
<feature type="domain" description="KH type-2" evidence="1">
    <location>
        <begin position="39"/>
        <end position="107"/>
    </location>
</feature>